<organism>
    <name type="scientific">Amborella trichopoda</name>
    <dbReference type="NCBI Taxonomy" id="13333"/>
    <lineage>
        <taxon>Eukaryota</taxon>
        <taxon>Viridiplantae</taxon>
        <taxon>Streptophyta</taxon>
        <taxon>Embryophyta</taxon>
        <taxon>Tracheophyta</taxon>
        <taxon>Spermatophyta</taxon>
        <taxon>Magnoliopsida</taxon>
        <taxon>Amborellales</taxon>
        <taxon>Amborellaceae</taxon>
        <taxon>Amborella</taxon>
    </lineage>
</organism>
<dbReference type="EC" id="7.1.1.-" evidence="1"/>
<dbReference type="EMBL" id="AJ506156">
    <property type="protein sequence ID" value="CAD45158.1"/>
    <property type="molecule type" value="Genomic_DNA"/>
</dbReference>
<dbReference type="RefSeq" id="NP_904151.1">
    <property type="nucleotide sequence ID" value="NC_005086.1"/>
</dbReference>
<dbReference type="SMR" id="Q70XW2"/>
<dbReference type="STRING" id="13333.Q70XW2"/>
<dbReference type="GeneID" id="2546603"/>
<dbReference type="KEGG" id="atr:2546603"/>
<dbReference type="OrthoDB" id="1925110at2759"/>
<dbReference type="Proteomes" id="UP000017836">
    <property type="component" value="Chloroplast"/>
</dbReference>
<dbReference type="GO" id="GO:0009535">
    <property type="term" value="C:chloroplast thylakoid membrane"/>
    <property type="evidence" value="ECO:0007669"/>
    <property type="project" value="UniProtKB-SubCell"/>
</dbReference>
<dbReference type="GO" id="GO:0030964">
    <property type="term" value="C:NADH dehydrogenase complex"/>
    <property type="evidence" value="ECO:0000318"/>
    <property type="project" value="GO_Central"/>
</dbReference>
<dbReference type="GO" id="GO:0016655">
    <property type="term" value="F:oxidoreductase activity, acting on NAD(P)H, quinone or similar compound as acceptor"/>
    <property type="evidence" value="ECO:0007669"/>
    <property type="project" value="UniProtKB-UniRule"/>
</dbReference>
<dbReference type="GO" id="GO:0048038">
    <property type="term" value="F:quinone binding"/>
    <property type="evidence" value="ECO:0007669"/>
    <property type="project" value="UniProtKB-KW"/>
</dbReference>
<dbReference type="GO" id="GO:0042773">
    <property type="term" value="P:ATP synthesis coupled electron transport"/>
    <property type="evidence" value="ECO:0007669"/>
    <property type="project" value="InterPro"/>
</dbReference>
<dbReference type="GO" id="GO:0019684">
    <property type="term" value="P:photosynthesis, light reaction"/>
    <property type="evidence" value="ECO:0007669"/>
    <property type="project" value="UniProtKB-UniRule"/>
</dbReference>
<dbReference type="FunFam" id="1.10.287.3510:FF:000001">
    <property type="entry name" value="NADH-quinone oxidoreductase subunit K"/>
    <property type="match status" value="1"/>
</dbReference>
<dbReference type="Gene3D" id="1.10.287.3510">
    <property type="match status" value="1"/>
</dbReference>
<dbReference type="HAMAP" id="MF_01456">
    <property type="entry name" value="NDH1_NuoK"/>
    <property type="match status" value="1"/>
</dbReference>
<dbReference type="InterPro" id="IPR001133">
    <property type="entry name" value="NADH_UbQ_OxRdtase_chain4L/K"/>
</dbReference>
<dbReference type="InterPro" id="IPR039428">
    <property type="entry name" value="NUOK/Mnh_C1-like"/>
</dbReference>
<dbReference type="NCBIfam" id="NF004320">
    <property type="entry name" value="PRK05715.1-2"/>
    <property type="match status" value="1"/>
</dbReference>
<dbReference type="PANTHER" id="PTHR11434:SF16">
    <property type="entry name" value="NADH-UBIQUINONE OXIDOREDUCTASE CHAIN 4L"/>
    <property type="match status" value="1"/>
</dbReference>
<dbReference type="PANTHER" id="PTHR11434">
    <property type="entry name" value="NADH-UBIQUINONE OXIDOREDUCTASE SUBUNIT ND4L"/>
    <property type="match status" value="1"/>
</dbReference>
<dbReference type="Pfam" id="PF00420">
    <property type="entry name" value="Oxidored_q2"/>
    <property type="match status" value="1"/>
</dbReference>
<feature type="chain" id="PRO_0000360303" description="NAD(P)H-quinone oxidoreductase subunit 4L, chloroplastic">
    <location>
        <begin position="1"/>
        <end position="101"/>
    </location>
</feature>
<feature type="transmembrane region" description="Helical" evidence="1">
    <location>
        <begin position="2"/>
        <end position="22"/>
    </location>
</feature>
<feature type="transmembrane region" description="Helical" evidence="1">
    <location>
        <begin position="32"/>
        <end position="52"/>
    </location>
</feature>
<feature type="transmembrane region" description="Helical" evidence="1">
    <location>
        <begin position="61"/>
        <end position="81"/>
    </location>
</feature>
<keyword id="KW-0150">Chloroplast</keyword>
<keyword id="KW-0472">Membrane</keyword>
<keyword id="KW-0520">NAD</keyword>
<keyword id="KW-0521">NADP</keyword>
<keyword id="KW-0934">Plastid</keyword>
<keyword id="KW-0618">Plastoquinone</keyword>
<keyword id="KW-0874">Quinone</keyword>
<keyword id="KW-1185">Reference proteome</keyword>
<keyword id="KW-0793">Thylakoid</keyword>
<keyword id="KW-1278">Translocase</keyword>
<keyword id="KW-0812">Transmembrane</keyword>
<keyword id="KW-1133">Transmembrane helix</keyword>
<keyword id="KW-0813">Transport</keyword>
<proteinExistence type="inferred from homology"/>
<evidence type="ECO:0000255" key="1">
    <source>
        <dbReference type="HAMAP-Rule" id="MF_01456"/>
    </source>
</evidence>
<sequence>MMFEYALVLSSYLFSMGIYGLITSRNMVRALMCLELILNAVNMNLVTFSDLFDSRQLKGDIFSIFVIAIAAAEAAIGPAIVSSIHRNRKSTRINQSNLLKK</sequence>
<accession>Q70XW2</accession>
<geneLocation type="chloroplast"/>
<gene>
    <name evidence="1" type="primary">ndhE</name>
</gene>
<protein>
    <recommendedName>
        <fullName evidence="1">NAD(P)H-quinone oxidoreductase subunit 4L, chloroplastic</fullName>
        <ecNumber evidence="1">7.1.1.-</ecNumber>
    </recommendedName>
    <alternativeName>
        <fullName evidence="1">NAD(P)H dehydrogenase subunit 4L</fullName>
    </alternativeName>
    <alternativeName>
        <fullName evidence="1">NADH-plastoquinone oxidoreductase subunit 4L</fullName>
    </alternativeName>
</protein>
<reference key="1">
    <citation type="journal article" date="2003" name="Mol. Biol. Evol.">
        <title>Analysis of the Amborella trichopoda chloroplast genome sequence suggests that Amborella is not a basal angiosperm.</title>
        <authorList>
            <person name="Goremykin V.V."/>
            <person name="Hirsch-Ernst K.I."/>
            <person name="Wolfl S."/>
            <person name="Hellwig F.H."/>
        </authorList>
    </citation>
    <scope>NUCLEOTIDE SEQUENCE [LARGE SCALE GENOMIC DNA]</scope>
</reference>
<comment type="function">
    <text evidence="1">NDH shuttles electrons from NAD(P)H:plastoquinone, via FMN and iron-sulfur (Fe-S) centers, to quinones in the photosynthetic chain and possibly in a chloroplast respiratory chain. The immediate electron acceptor for the enzyme in this species is believed to be plastoquinone. Couples the redox reaction to proton translocation, and thus conserves the redox energy in a proton gradient.</text>
</comment>
<comment type="catalytic activity">
    <reaction evidence="1">
        <text>a plastoquinone + NADH + (n+1) H(+)(in) = a plastoquinol + NAD(+) + n H(+)(out)</text>
        <dbReference type="Rhea" id="RHEA:42608"/>
        <dbReference type="Rhea" id="RHEA-COMP:9561"/>
        <dbReference type="Rhea" id="RHEA-COMP:9562"/>
        <dbReference type="ChEBI" id="CHEBI:15378"/>
        <dbReference type="ChEBI" id="CHEBI:17757"/>
        <dbReference type="ChEBI" id="CHEBI:57540"/>
        <dbReference type="ChEBI" id="CHEBI:57945"/>
        <dbReference type="ChEBI" id="CHEBI:62192"/>
    </reaction>
</comment>
<comment type="catalytic activity">
    <reaction evidence="1">
        <text>a plastoquinone + NADPH + (n+1) H(+)(in) = a plastoquinol + NADP(+) + n H(+)(out)</text>
        <dbReference type="Rhea" id="RHEA:42612"/>
        <dbReference type="Rhea" id="RHEA-COMP:9561"/>
        <dbReference type="Rhea" id="RHEA-COMP:9562"/>
        <dbReference type="ChEBI" id="CHEBI:15378"/>
        <dbReference type="ChEBI" id="CHEBI:17757"/>
        <dbReference type="ChEBI" id="CHEBI:57783"/>
        <dbReference type="ChEBI" id="CHEBI:58349"/>
        <dbReference type="ChEBI" id="CHEBI:62192"/>
    </reaction>
</comment>
<comment type="subunit">
    <text evidence="1">NDH is composed of at least 16 different subunits, 5 of which are encoded in the nucleus.</text>
</comment>
<comment type="subcellular location">
    <subcellularLocation>
        <location evidence="1">Plastid</location>
        <location evidence="1">Chloroplast thylakoid membrane</location>
        <topology evidence="1">Multi-pass membrane protein</topology>
    </subcellularLocation>
</comment>
<comment type="similarity">
    <text evidence="1">Belongs to the complex I subunit 4L family.</text>
</comment>
<name>NU4LC_AMBTC</name>